<proteinExistence type="inferred from homology"/>
<sequence>MTSYSFTEKKRIRKDFGKHRSILKVPFLLAIQVDSYRAFLQGDVESSQRKDIGLHGALKSVFPIVSYSGNAALEYVGYKLGEPMFDERECRQRGMSYGAPLRVTVRLVIYDRESSTKAVKYIKEQEVYLGEIPLMTENGTFIVNGTERVIVSQLHRSPGVFFDHDRGKTHSSGKLLYSARIIPCRGSWLDFEFDPKDALFTRIDRRRKLPVSILLRALGYSNEEILGEFFEINTFHINPDEGVQLELVPERLRGEILSFNLTDGGSVIVEAGKRITARHVKQLEASGISALAVPDEYLIGRILSHDVIDATTGELLASANSEVNEDRIIAFRKAGIESVGTLWVNDLDRGAYLSNTLRIDPTRTQLEAQVEIYRMMRPGEPPTKEAAQNLFHNLFFTFDRYDLSMVGRMKFNRRVGRKEVAGEPVLYDKKYFSDRNDEESRRLVSKLGETSDILDVIKGLCEIRNGRGVVDDIDHLGNRRVRSVGEMAENVFRVGLVRVERAVKERLSMAESEGLTPQELINAKPVAAAIKEFFGSSQLSQFMDQNNPLSEVTHKRRLSALGPGGLTRERAGFEVRDVHLSHYGCLCTIETPEGPNIGLINSLAVFARTNQYGFLETPYRKVVEGRVTDEVEYLSAIEENQYVIAQANTLTDDNGQLTESFVPCRFQGESLLKPPSYVHYMDVSPMQTVSVAAALVPFLEHDDANRALMGANMQRQAVPTLRAQKPLVGTGIERTVARDSGVTVNARRGGVIDQVDAGRIVVKVNESEIIGATDAGVDIYGLIKYTRSNQNTCINQRPLVNVGDIVASGDVLADGPSTDIGELALGQNMLIAFMPWNGYNFEDSILLSERVVEEDRYTTIHIEELTCIARDTKLGSEEISADIPNVSEQALNRLDESGVVYIGAEVRAGDILVGKVTPKGESQLTPEEKLLRAIFGEKASDVKDSSLRVPPGMDGTVIDVQVFTRDGIEKDKRAHQIEEYEIKRVKKDFDDQFRILEGAIYARLRSQIVGKVVNSGVDIKKGEVITDPYLDGLKKSDWFALRMKDEVAVEAIDRAQKQIQAYQKEFDQRFSDKRSKITQGDDLAPGVLKMVKVFLAVKRCIQCGDKMAGRHGNKGVISNVVPVEDMPFMEDGTPVDIVLNPLGVPSRMNIGQILEVHLGWAAKGLGHRIQRMLEANAAIADLRKFLNEIYNHDKSLVGERVDLSQFSDDELLNMAKNLTDGVPMASPVFDGASEQEIKRMLDLAELPAGGQTQLYDGHTGEPFDRKTTVGYMHYLKLNHLVDDKMHARSTGPYSLVTQQPLGGKAQFGGQRFGEMEVWALEAYGAAYTLQEMLTVKSDDVQGRNQMYKNIVDGDHQMVAGMPESFNVLVKEIRSLAINIELEDN</sequence>
<gene>
    <name evidence="1" type="primary">rpoB</name>
    <name type="ordered locus">XfasM23_2106</name>
</gene>
<evidence type="ECO:0000255" key="1">
    <source>
        <dbReference type="HAMAP-Rule" id="MF_01321"/>
    </source>
</evidence>
<comment type="function">
    <text evidence="1">DNA-dependent RNA polymerase catalyzes the transcription of DNA into RNA using the four ribonucleoside triphosphates as substrates.</text>
</comment>
<comment type="catalytic activity">
    <reaction evidence="1">
        <text>RNA(n) + a ribonucleoside 5'-triphosphate = RNA(n+1) + diphosphate</text>
        <dbReference type="Rhea" id="RHEA:21248"/>
        <dbReference type="Rhea" id="RHEA-COMP:14527"/>
        <dbReference type="Rhea" id="RHEA-COMP:17342"/>
        <dbReference type="ChEBI" id="CHEBI:33019"/>
        <dbReference type="ChEBI" id="CHEBI:61557"/>
        <dbReference type="ChEBI" id="CHEBI:140395"/>
        <dbReference type="EC" id="2.7.7.6"/>
    </reaction>
</comment>
<comment type="subunit">
    <text evidence="1">The RNAP catalytic core consists of 2 alpha, 1 beta, 1 beta' and 1 omega subunit. When a sigma factor is associated with the core the holoenzyme is formed, which can initiate transcription.</text>
</comment>
<comment type="similarity">
    <text evidence="1">Belongs to the RNA polymerase beta chain family.</text>
</comment>
<reference key="1">
    <citation type="journal article" date="2010" name="J. Bacteriol.">
        <title>Whole genome sequences of two Xylella fastidiosa strains (M12 and M23) causing almond leaf scorch disease in California.</title>
        <authorList>
            <person name="Chen J."/>
            <person name="Xie G."/>
            <person name="Han S."/>
            <person name="Chertkov O."/>
            <person name="Sims D."/>
            <person name="Civerolo E.L."/>
        </authorList>
    </citation>
    <scope>NUCLEOTIDE SEQUENCE [LARGE SCALE GENOMIC DNA]</scope>
    <source>
        <strain>M23</strain>
    </source>
</reference>
<protein>
    <recommendedName>
        <fullName evidence="1">DNA-directed RNA polymerase subunit beta</fullName>
        <shortName evidence="1">RNAP subunit beta</shortName>
        <ecNumber evidence="1">2.7.7.6</ecNumber>
    </recommendedName>
    <alternativeName>
        <fullName evidence="1">RNA polymerase subunit beta</fullName>
    </alternativeName>
    <alternativeName>
        <fullName evidence="1">Transcriptase subunit beta</fullName>
    </alternativeName>
</protein>
<keyword id="KW-0240">DNA-directed RNA polymerase</keyword>
<keyword id="KW-0548">Nucleotidyltransferase</keyword>
<keyword id="KW-0804">Transcription</keyword>
<keyword id="KW-0808">Transferase</keyword>
<dbReference type="EC" id="2.7.7.6" evidence="1"/>
<dbReference type="EMBL" id="CP001011">
    <property type="protein sequence ID" value="ACB93504.1"/>
    <property type="molecule type" value="Genomic_DNA"/>
</dbReference>
<dbReference type="RefSeq" id="WP_004090725.1">
    <property type="nucleotide sequence ID" value="NC_010577.1"/>
</dbReference>
<dbReference type="SMR" id="B2IA68"/>
<dbReference type="GeneID" id="93905862"/>
<dbReference type="KEGG" id="xfn:XfasM23_2106"/>
<dbReference type="HOGENOM" id="CLU_000524_4_0_6"/>
<dbReference type="Proteomes" id="UP000001698">
    <property type="component" value="Chromosome"/>
</dbReference>
<dbReference type="GO" id="GO:0000428">
    <property type="term" value="C:DNA-directed RNA polymerase complex"/>
    <property type="evidence" value="ECO:0007669"/>
    <property type="project" value="UniProtKB-KW"/>
</dbReference>
<dbReference type="GO" id="GO:0003677">
    <property type="term" value="F:DNA binding"/>
    <property type="evidence" value="ECO:0007669"/>
    <property type="project" value="UniProtKB-UniRule"/>
</dbReference>
<dbReference type="GO" id="GO:0003899">
    <property type="term" value="F:DNA-directed RNA polymerase activity"/>
    <property type="evidence" value="ECO:0007669"/>
    <property type="project" value="UniProtKB-UniRule"/>
</dbReference>
<dbReference type="GO" id="GO:0032549">
    <property type="term" value="F:ribonucleoside binding"/>
    <property type="evidence" value="ECO:0007669"/>
    <property type="project" value="InterPro"/>
</dbReference>
<dbReference type="GO" id="GO:0006351">
    <property type="term" value="P:DNA-templated transcription"/>
    <property type="evidence" value="ECO:0007669"/>
    <property type="project" value="UniProtKB-UniRule"/>
</dbReference>
<dbReference type="CDD" id="cd00653">
    <property type="entry name" value="RNA_pol_B_RPB2"/>
    <property type="match status" value="1"/>
</dbReference>
<dbReference type="FunFam" id="2.40.50.100:FF:000006">
    <property type="entry name" value="DNA-directed RNA polymerase subunit beta"/>
    <property type="match status" value="1"/>
</dbReference>
<dbReference type="FunFam" id="2.40.50.150:FF:000001">
    <property type="entry name" value="DNA-directed RNA polymerase subunit beta"/>
    <property type="match status" value="1"/>
</dbReference>
<dbReference type="FunFam" id="3.90.1800.10:FF:000001">
    <property type="entry name" value="DNA-directed RNA polymerase subunit beta"/>
    <property type="match status" value="1"/>
</dbReference>
<dbReference type="Gene3D" id="2.40.50.100">
    <property type="match status" value="1"/>
</dbReference>
<dbReference type="Gene3D" id="2.40.50.150">
    <property type="match status" value="1"/>
</dbReference>
<dbReference type="Gene3D" id="3.90.1100.10">
    <property type="match status" value="2"/>
</dbReference>
<dbReference type="Gene3D" id="2.30.150.10">
    <property type="entry name" value="DNA-directed RNA polymerase, beta subunit, external 1 domain"/>
    <property type="match status" value="1"/>
</dbReference>
<dbReference type="Gene3D" id="2.40.270.10">
    <property type="entry name" value="DNA-directed RNA polymerase, subunit 2, domain 6"/>
    <property type="match status" value="2"/>
</dbReference>
<dbReference type="Gene3D" id="3.90.1800.10">
    <property type="entry name" value="RNA polymerase alpha subunit dimerisation domain"/>
    <property type="match status" value="1"/>
</dbReference>
<dbReference type="Gene3D" id="3.90.1110.10">
    <property type="entry name" value="RNA polymerase Rpb2, domain 2"/>
    <property type="match status" value="2"/>
</dbReference>
<dbReference type="HAMAP" id="MF_01321">
    <property type="entry name" value="RNApol_bact_RpoB"/>
    <property type="match status" value="1"/>
</dbReference>
<dbReference type="InterPro" id="IPR042107">
    <property type="entry name" value="DNA-dir_RNA_pol_bsu_ext_1_sf"/>
</dbReference>
<dbReference type="InterPro" id="IPR019462">
    <property type="entry name" value="DNA-dir_RNA_pol_bsu_external_1"/>
</dbReference>
<dbReference type="InterPro" id="IPR015712">
    <property type="entry name" value="DNA-dir_RNA_pol_su2"/>
</dbReference>
<dbReference type="InterPro" id="IPR007120">
    <property type="entry name" value="DNA-dir_RNAP_su2_dom"/>
</dbReference>
<dbReference type="InterPro" id="IPR037033">
    <property type="entry name" value="DNA-dir_RNAP_su2_hyb_sf"/>
</dbReference>
<dbReference type="InterPro" id="IPR010243">
    <property type="entry name" value="RNA_pol_bsu_bac"/>
</dbReference>
<dbReference type="InterPro" id="IPR007121">
    <property type="entry name" value="RNA_pol_bsu_CS"/>
</dbReference>
<dbReference type="InterPro" id="IPR007644">
    <property type="entry name" value="RNA_pol_bsu_protrusion"/>
</dbReference>
<dbReference type="InterPro" id="IPR007642">
    <property type="entry name" value="RNA_pol_Rpb2_2"/>
</dbReference>
<dbReference type="InterPro" id="IPR037034">
    <property type="entry name" value="RNA_pol_Rpb2_2_sf"/>
</dbReference>
<dbReference type="InterPro" id="IPR007645">
    <property type="entry name" value="RNA_pol_Rpb2_3"/>
</dbReference>
<dbReference type="InterPro" id="IPR007641">
    <property type="entry name" value="RNA_pol_Rpb2_7"/>
</dbReference>
<dbReference type="InterPro" id="IPR014724">
    <property type="entry name" value="RNA_pol_RPB2_OB-fold"/>
</dbReference>
<dbReference type="NCBIfam" id="NF001616">
    <property type="entry name" value="PRK00405.1"/>
    <property type="match status" value="1"/>
</dbReference>
<dbReference type="NCBIfam" id="TIGR02013">
    <property type="entry name" value="rpoB"/>
    <property type="match status" value="1"/>
</dbReference>
<dbReference type="PANTHER" id="PTHR20856">
    <property type="entry name" value="DNA-DIRECTED RNA POLYMERASE I SUBUNIT 2"/>
    <property type="match status" value="1"/>
</dbReference>
<dbReference type="Pfam" id="PF04563">
    <property type="entry name" value="RNA_pol_Rpb2_1"/>
    <property type="match status" value="1"/>
</dbReference>
<dbReference type="Pfam" id="PF04561">
    <property type="entry name" value="RNA_pol_Rpb2_2"/>
    <property type="match status" value="2"/>
</dbReference>
<dbReference type="Pfam" id="PF04565">
    <property type="entry name" value="RNA_pol_Rpb2_3"/>
    <property type="match status" value="1"/>
</dbReference>
<dbReference type="Pfam" id="PF10385">
    <property type="entry name" value="RNA_pol_Rpb2_45"/>
    <property type="match status" value="1"/>
</dbReference>
<dbReference type="Pfam" id="PF00562">
    <property type="entry name" value="RNA_pol_Rpb2_6"/>
    <property type="match status" value="1"/>
</dbReference>
<dbReference type="Pfam" id="PF04560">
    <property type="entry name" value="RNA_pol_Rpb2_7"/>
    <property type="match status" value="1"/>
</dbReference>
<dbReference type="SUPFAM" id="SSF64484">
    <property type="entry name" value="beta and beta-prime subunits of DNA dependent RNA-polymerase"/>
    <property type="match status" value="1"/>
</dbReference>
<dbReference type="PROSITE" id="PS01166">
    <property type="entry name" value="RNA_POL_BETA"/>
    <property type="match status" value="1"/>
</dbReference>
<feature type="chain" id="PRO_1000141752" description="DNA-directed RNA polymerase subunit beta">
    <location>
        <begin position="1"/>
        <end position="1384"/>
    </location>
</feature>
<organism>
    <name type="scientific">Xylella fastidiosa (strain M23)</name>
    <dbReference type="NCBI Taxonomy" id="405441"/>
    <lineage>
        <taxon>Bacteria</taxon>
        <taxon>Pseudomonadati</taxon>
        <taxon>Pseudomonadota</taxon>
        <taxon>Gammaproteobacteria</taxon>
        <taxon>Lysobacterales</taxon>
        <taxon>Lysobacteraceae</taxon>
        <taxon>Xylella</taxon>
    </lineage>
</organism>
<accession>B2IA68</accession>
<name>RPOB_XYLF2</name>